<protein>
    <recommendedName>
        <fullName evidence="1">Large ribosomal subunit protein bL9</fullName>
    </recommendedName>
    <alternativeName>
        <fullName evidence="2">50S ribosomal protein L9</fullName>
    </alternativeName>
</protein>
<gene>
    <name evidence="1" type="primary">rplI</name>
    <name type="ordered locus">BCE_5620</name>
</gene>
<accession>Q72WV8</accession>
<keyword id="KW-0687">Ribonucleoprotein</keyword>
<keyword id="KW-0689">Ribosomal protein</keyword>
<keyword id="KW-0694">RNA-binding</keyword>
<keyword id="KW-0699">rRNA-binding</keyword>
<sequence length="148" mass="16369">MKVIFLKDVKGKGKKGEVKNVPDGYANNFLLKQGLAAEATNSSMKTLEAQKRKEEKDAAAELENAKQLKETLEKLTVELKAKSGEGGRLFGSITSKQIVDAMQKSHNIKLDKRKFEMDDAIRALGYTNVTVKLHPQVTATVKVHVSEQ</sequence>
<dbReference type="EMBL" id="AE017194">
    <property type="protein sequence ID" value="AAS44520.1"/>
    <property type="molecule type" value="Genomic_DNA"/>
</dbReference>
<dbReference type="SMR" id="Q72WV8"/>
<dbReference type="KEGG" id="bca:BCE_5620"/>
<dbReference type="HOGENOM" id="CLU_078938_3_2_9"/>
<dbReference type="Proteomes" id="UP000002527">
    <property type="component" value="Chromosome"/>
</dbReference>
<dbReference type="GO" id="GO:1990904">
    <property type="term" value="C:ribonucleoprotein complex"/>
    <property type="evidence" value="ECO:0007669"/>
    <property type="project" value="UniProtKB-KW"/>
</dbReference>
<dbReference type="GO" id="GO:0005840">
    <property type="term" value="C:ribosome"/>
    <property type="evidence" value="ECO:0007669"/>
    <property type="project" value="UniProtKB-KW"/>
</dbReference>
<dbReference type="GO" id="GO:0019843">
    <property type="term" value="F:rRNA binding"/>
    <property type="evidence" value="ECO:0007669"/>
    <property type="project" value="UniProtKB-UniRule"/>
</dbReference>
<dbReference type="GO" id="GO:0003735">
    <property type="term" value="F:structural constituent of ribosome"/>
    <property type="evidence" value="ECO:0007669"/>
    <property type="project" value="InterPro"/>
</dbReference>
<dbReference type="GO" id="GO:0006412">
    <property type="term" value="P:translation"/>
    <property type="evidence" value="ECO:0007669"/>
    <property type="project" value="UniProtKB-UniRule"/>
</dbReference>
<dbReference type="FunFam" id="3.10.430.100:FF:000002">
    <property type="entry name" value="50S ribosomal protein L9"/>
    <property type="match status" value="1"/>
</dbReference>
<dbReference type="FunFam" id="3.40.5.10:FF:000002">
    <property type="entry name" value="50S ribosomal protein L9"/>
    <property type="match status" value="1"/>
</dbReference>
<dbReference type="Gene3D" id="3.10.430.100">
    <property type="entry name" value="Ribosomal protein L9, C-terminal domain"/>
    <property type="match status" value="1"/>
</dbReference>
<dbReference type="Gene3D" id="3.40.5.10">
    <property type="entry name" value="Ribosomal protein L9, N-terminal domain"/>
    <property type="match status" value="1"/>
</dbReference>
<dbReference type="HAMAP" id="MF_00503">
    <property type="entry name" value="Ribosomal_bL9"/>
    <property type="match status" value="1"/>
</dbReference>
<dbReference type="InterPro" id="IPR000244">
    <property type="entry name" value="Ribosomal_bL9"/>
</dbReference>
<dbReference type="InterPro" id="IPR009027">
    <property type="entry name" value="Ribosomal_bL9/RNase_H1_N"/>
</dbReference>
<dbReference type="InterPro" id="IPR020594">
    <property type="entry name" value="Ribosomal_bL9_bac/chp"/>
</dbReference>
<dbReference type="InterPro" id="IPR020069">
    <property type="entry name" value="Ribosomal_bL9_C"/>
</dbReference>
<dbReference type="InterPro" id="IPR036791">
    <property type="entry name" value="Ribosomal_bL9_C_sf"/>
</dbReference>
<dbReference type="InterPro" id="IPR020070">
    <property type="entry name" value="Ribosomal_bL9_N"/>
</dbReference>
<dbReference type="InterPro" id="IPR036935">
    <property type="entry name" value="Ribosomal_bL9_N_sf"/>
</dbReference>
<dbReference type="NCBIfam" id="TIGR00158">
    <property type="entry name" value="L9"/>
    <property type="match status" value="1"/>
</dbReference>
<dbReference type="PANTHER" id="PTHR21368">
    <property type="entry name" value="50S RIBOSOMAL PROTEIN L9"/>
    <property type="match status" value="1"/>
</dbReference>
<dbReference type="Pfam" id="PF03948">
    <property type="entry name" value="Ribosomal_L9_C"/>
    <property type="match status" value="1"/>
</dbReference>
<dbReference type="Pfam" id="PF01281">
    <property type="entry name" value="Ribosomal_L9_N"/>
    <property type="match status" value="1"/>
</dbReference>
<dbReference type="SUPFAM" id="SSF55658">
    <property type="entry name" value="L9 N-domain-like"/>
    <property type="match status" value="1"/>
</dbReference>
<dbReference type="SUPFAM" id="SSF55653">
    <property type="entry name" value="Ribosomal protein L9 C-domain"/>
    <property type="match status" value="1"/>
</dbReference>
<dbReference type="PROSITE" id="PS00651">
    <property type="entry name" value="RIBOSOMAL_L9"/>
    <property type="match status" value="1"/>
</dbReference>
<reference key="1">
    <citation type="journal article" date="2004" name="Nucleic Acids Res.">
        <title>The genome sequence of Bacillus cereus ATCC 10987 reveals metabolic adaptations and a large plasmid related to Bacillus anthracis pXO1.</title>
        <authorList>
            <person name="Rasko D.A."/>
            <person name="Ravel J."/>
            <person name="Oekstad O.A."/>
            <person name="Helgason E."/>
            <person name="Cer R.Z."/>
            <person name="Jiang L."/>
            <person name="Shores K.A."/>
            <person name="Fouts D.E."/>
            <person name="Tourasse N.J."/>
            <person name="Angiuoli S.V."/>
            <person name="Kolonay J.F."/>
            <person name="Nelson W.C."/>
            <person name="Kolstoe A.-B."/>
            <person name="Fraser C.M."/>
            <person name="Read T.D."/>
        </authorList>
    </citation>
    <scope>NUCLEOTIDE SEQUENCE [LARGE SCALE GENOMIC DNA]</scope>
    <source>
        <strain>ATCC 10987 / NRS 248</strain>
    </source>
</reference>
<evidence type="ECO:0000255" key="1">
    <source>
        <dbReference type="HAMAP-Rule" id="MF_00503"/>
    </source>
</evidence>
<evidence type="ECO:0000305" key="2"/>
<comment type="function">
    <text evidence="1">Binds to the 23S rRNA.</text>
</comment>
<comment type="similarity">
    <text evidence="1">Belongs to the bacterial ribosomal protein bL9 family.</text>
</comment>
<feature type="chain" id="PRO_0000236474" description="Large ribosomal subunit protein bL9">
    <location>
        <begin position="1"/>
        <end position="148"/>
    </location>
</feature>
<organism>
    <name type="scientific">Bacillus cereus (strain ATCC 10987 / NRS 248)</name>
    <dbReference type="NCBI Taxonomy" id="222523"/>
    <lineage>
        <taxon>Bacteria</taxon>
        <taxon>Bacillati</taxon>
        <taxon>Bacillota</taxon>
        <taxon>Bacilli</taxon>
        <taxon>Bacillales</taxon>
        <taxon>Bacillaceae</taxon>
        <taxon>Bacillus</taxon>
        <taxon>Bacillus cereus group</taxon>
    </lineage>
</organism>
<name>RL9_BACC1</name>
<proteinExistence type="inferred from homology"/>